<reference key="1">
    <citation type="journal article" date="2004" name="Proc. Natl. Acad. Sci. U.S.A.">
        <title>Complete genomes of two clinical Staphylococcus aureus strains: evidence for the rapid evolution of virulence and drug resistance.</title>
        <authorList>
            <person name="Holden M.T.G."/>
            <person name="Feil E.J."/>
            <person name="Lindsay J.A."/>
            <person name="Peacock S.J."/>
            <person name="Day N.P.J."/>
            <person name="Enright M.C."/>
            <person name="Foster T.J."/>
            <person name="Moore C.E."/>
            <person name="Hurst L."/>
            <person name="Atkin R."/>
            <person name="Barron A."/>
            <person name="Bason N."/>
            <person name="Bentley S.D."/>
            <person name="Chillingworth C."/>
            <person name="Chillingworth T."/>
            <person name="Churcher C."/>
            <person name="Clark L."/>
            <person name="Corton C."/>
            <person name="Cronin A."/>
            <person name="Doggett J."/>
            <person name="Dowd L."/>
            <person name="Feltwell T."/>
            <person name="Hance Z."/>
            <person name="Harris B."/>
            <person name="Hauser H."/>
            <person name="Holroyd S."/>
            <person name="Jagels K."/>
            <person name="James K.D."/>
            <person name="Lennard N."/>
            <person name="Line A."/>
            <person name="Mayes R."/>
            <person name="Moule S."/>
            <person name="Mungall K."/>
            <person name="Ormond D."/>
            <person name="Quail M.A."/>
            <person name="Rabbinowitsch E."/>
            <person name="Rutherford K.M."/>
            <person name="Sanders M."/>
            <person name="Sharp S."/>
            <person name="Simmonds M."/>
            <person name="Stevens K."/>
            <person name="Whitehead S."/>
            <person name="Barrell B.G."/>
            <person name="Spratt B.G."/>
            <person name="Parkhill J."/>
        </authorList>
    </citation>
    <scope>NUCLEOTIDE SEQUENCE [LARGE SCALE GENOMIC DNA]</scope>
    <source>
        <strain>MRSA252</strain>
    </source>
</reference>
<organism>
    <name type="scientific">Staphylococcus aureus (strain MRSA252)</name>
    <dbReference type="NCBI Taxonomy" id="282458"/>
    <lineage>
        <taxon>Bacteria</taxon>
        <taxon>Bacillati</taxon>
        <taxon>Bacillota</taxon>
        <taxon>Bacilli</taxon>
        <taxon>Bacillales</taxon>
        <taxon>Staphylococcaceae</taxon>
        <taxon>Staphylococcus</taxon>
    </lineage>
</organism>
<evidence type="ECO:0000250" key="1"/>
<evidence type="ECO:0000255" key="2">
    <source>
        <dbReference type="PROSITE-ProRule" id="PRU00691"/>
    </source>
</evidence>
<evidence type="ECO:0000305" key="3"/>
<gene>
    <name type="primary">trxA</name>
    <name type="ordered locus">SAR1118</name>
</gene>
<keyword id="KW-1015">Disulfide bond</keyword>
<keyword id="KW-0249">Electron transport</keyword>
<keyword id="KW-0676">Redox-active center</keyword>
<keyword id="KW-0813">Transport</keyword>
<comment type="function">
    <text evidence="1">Component of the thioredoxin-thioredoxin reductase system. Participates in various redox reactions through the reversible oxidation of its active center dithiol to a disulfide and catalyzes dithiol-disulfide exchange reactions (By similarity).</text>
</comment>
<comment type="similarity">
    <text evidence="3">Belongs to the thioredoxin family.</text>
</comment>
<proteinExistence type="inferred from homology"/>
<dbReference type="EMBL" id="BX571856">
    <property type="protein sequence ID" value="CAG40121.1"/>
    <property type="molecule type" value="Genomic_DNA"/>
</dbReference>
<dbReference type="RefSeq" id="WP_001018928.1">
    <property type="nucleotide sequence ID" value="NC_002952.2"/>
</dbReference>
<dbReference type="SMR" id="Q6GHU0"/>
<dbReference type="GeneID" id="98345462"/>
<dbReference type="KEGG" id="sar:SAR1118"/>
<dbReference type="HOGENOM" id="CLU_090389_10_2_9"/>
<dbReference type="Proteomes" id="UP000000596">
    <property type="component" value="Chromosome"/>
</dbReference>
<dbReference type="GO" id="GO:0005829">
    <property type="term" value="C:cytosol"/>
    <property type="evidence" value="ECO:0007669"/>
    <property type="project" value="TreeGrafter"/>
</dbReference>
<dbReference type="GO" id="GO:0015035">
    <property type="term" value="F:protein-disulfide reductase activity"/>
    <property type="evidence" value="ECO:0007669"/>
    <property type="project" value="InterPro"/>
</dbReference>
<dbReference type="GO" id="GO:0045454">
    <property type="term" value="P:cell redox homeostasis"/>
    <property type="evidence" value="ECO:0007669"/>
    <property type="project" value="TreeGrafter"/>
</dbReference>
<dbReference type="CDD" id="cd02947">
    <property type="entry name" value="TRX_family"/>
    <property type="match status" value="1"/>
</dbReference>
<dbReference type="FunFam" id="3.40.30.10:FF:000001">
    <property type="entry name" value="Thioredoxin"/>
    <property type="match status" value="1"/>
</dbReference>
<dbReference type="Gene3D" id="3.40.30.10">
    <property type="entry name" value="Glutaredoxin"/>
    <property type="match status" value="1"/>
</dbReference>
<dbReference type="InterPro" id="IPR005746">
    <property type="entry name" value="Thioredoxin"/>
</dbReference>
<dbReference type="InterPro" id="IPR036249">
    <property type="entry name" value="Thioredoxin-like_sf"/>
</dbReference>
<dbReference type="InterPro" id="IPR017937">
    <property type="entry name" value="Thioredoxin_CS"/>
</dbReference>
<dbReference type="InterPro" id="IPR013766">
    <property type="entry name" value="Thioredoxin_domain"/>
</dbReference>
<dbReference type="NCBIfam" id="TIGR01068">
    <property type="entry name" value="thioredoxin"/>
    <property type="match status" value="1"/>
</dbReference>
<dbReference type="PANTHER" id="PTHR45663">
    <property type="entry name" value="GEO12009P1"/>
    <property type="match status" value="1"/>
</dbReference>
<dbReference type="PANTHER" id="PTHR45663:SF11">
    <property type="entry name" value="GEO12009P1"/>
    <property type="match status" value="1"/>
</dbReference>
<dbReference type="Pfam" id="PF00085">
    <property type="entry name" value="Thioredoxin"/>
    <property type="match status" value="1"/>
</dbReference>
<dbReference type="PIRSF" id="PIRSF000077">
    <property type="entry name" value="Thioredoxin"/>
    <property type="match status" value="1"/>
</dbReference>
<dbReference type="PRINTS" id="PR00421">
    <property type="entry name" value="THIOREDOXIN"/>
</dbReference>
<dbReference type="SUPFAM" id="SSF52833">
    <property type="entry name" value="Thioredoxin-like"/>
    <property type="match status" value="1"/>
</dbReference>
<dbReference type="PROSITE" id="PS00194">
    <property type="entry name" value="THIOREDOXIN_1"/>
    <property type="match status" value="1"/>
</dbReference>
<dbReference type="PROSITE" id="PS51352">
    <property type="entry name" value="THIOREDOXIN_2"/>
    <property type="match status" value="1"/>
</dbReference>
<feature type="chain" id="PRO_0000120128" description="Thioredoxin">
    <location>
        <begin position="1"/>
        <end position="104"/>
    </location>
</feature>
<feature type="domain" description="Thioredoxin" evidence="2">
    <location>
        <begin position="2"/>
        <end position="104"/>
    </location>
</feature>
<feature type="disulfide bond" description="Redox-active" evidence="2">
    <location>
        <begin position="29"/>
        <end position="32"/>
    </location>
</feature>
<protein>
    <recommendedName>
        <fullName>Thioredoxin</fullName>
        <shortName>Trx</shortName>
    </recommendedName>
</protein>
<accession>Q6GHU0</accession>
<sequence>MAIVKVTDADFDSKVESGVQLVDFWATWCGPCKMIAPVLEELAADYEGKADILKLDVDENPSTAAKYEVMSIPTLIVFKDGQPVDKVVGFQPKENLAEVLDKHL</sequence>
<name>THIO_STAAR</name>